<dbReference type="EMBL" id="EU145733">
    <property type="protein sequence ID" value="ABV80288.1"/>
    <property type="status" value="ALT_INIT"/>
    <property type="molecule type" value="Genomic_DNA"/>
</dbReference>
<dbReference type="EMBL" id="CP000951">
    <property type="protein sequence ID" value="ACB00746.1"/>
    <property type="molecule type" value="Genomic_DNA"/>
</dbReference>
<dbReference type="SMR" id="B1XMM7"/>
<dbReference type="STRING" id="32049.SYNPCC7002_A2772"/>
<dbReference type="KEGG" id="syp:SYNPCC7002_A2772"/>
<dbReference type="eggNOG" id="ENOG5033TRE">
    <property type="taxonomic scope" value="Bacteria"/>
</dbReference>
<dbReference type="HOGENOM" id="CLU_1493549_0_0_3"/>
<dbReference type="Proteomes" id="UP000001688">
    <property type="component" value="Chromosome"/>
</dbReference>
<dbReference type="GO" id="GO:0016829">
    <property type="term" value="F:lyase activity"/>
    <property type="evidence" value="ECO:0007669"/>
    <property type="project" value="UniProtKB-KW"/>
</dbReference>
<dbReference type="CDD" id="cd19433">
    <property type="entry name" value="lipocalin_CpcS-CpeS"/>
    <property type="match status" value="1"/>
</dbReference>
<dbReference type="Gene3D" id="2.40.128.20">
    <property type="match status" value="1"/>
</dbReference>
<dbReference type="HAMAP" id="MF_01459">
    <property type="entry name" value="Chrphore_lyase_CpxS"/>
    <property type="match status" value="1"/>
</dbReference>
<dbReference type="InterPro" id="IPR012674">
    <property type="entry name" value="Calycin"/>
</dbReference>
<dbReference type="InterPro" id="IPR018536">
    <property type="entry name" value="CpcS/CpeS"/>
</dbReference>
<dbReference type="Pfam" id="PF09367">
    <property type="entry name" value="CpeS"/>
    <property type="match status" value="1"/>
</dbReference>
<sequence>MPCPGLQENVTIYKLSIDICRSSRSSSPMNLLATSPSASTAFFQRSAGRWHSQRRYYTLNSDQEPLEAISAIEVVFLPAEHPHLKPLAIAHHLSPDQAFQCGAKVTWESTYTNVQRKPLKGETIFGIRDQLMYRDRGFSTTAPIVAEFELIQPHVMRLQTAYDGASFEEEIKFVGDKHRTRQTITSRAGQELMIAQYLETRL</sequence>
<feature type="chain" id="PRO_0000403141" description="Putative chromophore lyase CpcV">
    <location>
        <begin position="1"/>
        <end position="202"/>
    </location>
</feature>
<accession>B1XMM7</accession>
<accession>A8HTN9</accession>
<comment type="function">
    <text evidence="2">Covalently attaches a chromophore to Cys residue(s) of phycobiliproteins.</text>
</comment>
<comment type="disruption phenotype">
    <text evidence="1">No visible phenotype; a triple cpcS/cpcU/cpcV deletion mutant has decreased amounts of allophycocyanin beta subunit (ApcB) compared to a double cpcS/cpcU deletion mutant. The lyase activity is therefore unsure.</text>
</comment>
<comment type="similarity">
    <text evidence="2">Belongs to the CpcS/CpeS biliprotein lyase family.</text>
</comment>
<comment type="sequence caution" evidence="2">
    <conflict type="erroneous initiation">
        <sequence resource="EMBL-CDS" id="ABV80288"/>
    </conflict>
    <text>Truncated N-terminus.</text>
</comment>
<proteinExistence type="inferred from homology"/>
<protein>
    <recommendedName>
        <fullName>Putative chromophore lyase CpcV</fullName>
    </recommendedName>
</protein>
<keyword id="KW-0456">Lyase</keyword>
<keyword id="KW-1185">Reference proteome</keyword>
<gene>
    <name type="primary">cpcV</name>
    <name type="ordered locus">SYNPCC7002_A2772</name>
</gene>
<name>CPCV_PICP2</name>
<reference key="1">
    <citation type="journal article" date="2008" name="J. Biol. Chem.">
        <title>Biogenesis of phycobiliproteins: I. cpcS-I and cpcU mutants of the cyanobacterium Synechococcus sp. PCC 7002 define a heterodimeric phyococyanobilin lyase specific for beta-phycocyanin and allophycocyanin subunits.</title>
        <authorList>
            <person name="Shen G."/>
            <person name="Schluchter W.M."/>
            <person name="Bryant D.A."/>
        </authorList>
    </citation>
    <scope>NUCLEOTIDE SEQUENCE [GENOMIC DNA]</scope>
    <scope>DISRUPTION PHENOTYPE</scope>
    <source>
        <strain>ATCC 27264 / PCC 7002 / PR-6</strain>
    </source>
</reference>
<reference key="2">
    <citation type="submission" date="2008-02" db="EMBL/GenBank/DDBJ databases">
        <title>Complete sequence of Synechococcus sp. PCC 7002.</title>
        <authorList>
            <person name="Li T."/>
            <person name="Zhao J."/>
            <person name="Zhao C."/>
            <person name="Liu Z."/>
            <person name="Zhao F."/>
            <person name="Marquardt J."/>
            <person name="Nomura C.T."/>
            <person name="Persson S."/>
            <person name="Detter J.C."/>
            <person name="Richardson P.M."/>
            <person name="Lanz C."/>
            <person name="Schuster S.C."/>
            <person name="Wang J."/>
            <person name="Li S."/>
            <person name="Huang X."/>
            <person name="Cai T."/>
            <person name="Yu Z."/>
            <person name="Luo J."/>
            <person name="Zhao J."/>
            <person name="Bryant D.A."/>
        </authorList>
    </citation>
    <scope>NUCLEOTIDE SEQUENCE [LARGE SCALE GENOMIC DNA]</scope>
    <source>
        <strain>ATCC 27264 / PCC 7002 / PR-6</strain>
    </source>
</reference>
<evidence type="ECO:0000269" key="1">
    <source>
    </source>
</evidence>
<evidence type="ECO:0000305" key="2"/>
<organism>
    <name type="scientific">Picosynechococcus sp. (strain ATCC 27264 / PCC 7002 / PR-6)</name>
    <name type="common">Agmenellum quadruplicatum</name>
    <dbReference type="NCBI Taxonomy" id="32049"/>
    <lineage>
        <taxon>Bacteria</taxon>
        <taxon>Bacillati</taxon>
        <taxon>Cyanobacteriota</taxon>
        <taxon>Cyanophyceae</taxon>
        <taxon>Oscillatoriophycideae</taxon>
        <taxon>Chroococcales</taxon>
        <taxon>Geminocystaceae</taxon>
        <taxon>Picosynechococcus</taxon>
    </lineage>
</organism>